<reference key="1">
    <citation type="journal article" date="2009" name="Nature">
        <title>Evolution of pathogenicity and sexual reproduction in eight Candida genomes.</title>
        <authorList>
            <person name="Butler G."/>
            <person name="Rasmussen M.D."/>
            <person name="Lin M.F."/>
            <person name="Santos M.A.S."/>
            <person name="Sakthikumar S."/>
            <person name="Munro C.A."/>
            <person name="Rheinbay E."/>
            <person name="Grabherr M."/>
            <person name="Forche A."/>
            <person name="Reedy J.L."/>
            <person name="Agrafioti I."/>
            <person name="Arnaud M.B."/>
            <person name="Bates S."/>
            <person name="Brown A.J.P."/>
            <person name="Brunke S."/>
            <person name="Costanzo M.C."/>
            <person name="Fitzpatrick D.A."/>
            <person name="de Groot P.W.J."/>
            <person name="Harris D."/>
            <person name="Hoyer L.L."/>
            <person name="Hube B."/>
            <person name="Klis F.M."/>
            <person name="Kodira C."/>
            <person name="Lennard N."/>
            <person name="Logue M.E."/>
            <person name="Martin R."/>
            <person name="Neiman A.M."/>
            <person name="Nikolaou E."/>
            <person name="Quail M.A."/>
            <person name="Quinn J."/>
            <person name="Santos M.C."/>
            <person name="Schmitzberger F.F."/>
            <person name="Sherlock G."/>
            <person name="Shah P."/>
            <person name="Silverstein K.A.T."/>
            <person name="Skrzypek M.S."/>
            <person name="Soll D."/>
            <person name="Staggs R."/>
            <person name="Stansfield I."/>
            <person name="Stumpf M.P.H."/>
            <person name="Sudbery P.E."/>
            <person name="Srikantha T."/>
            <person name="Zeng Q."/>
            <person name="Berman J."/>
            <person name="Berriman M."/>
            <person name="Heitman J."/>
            <person name="Gow N.A.R."/>
            <person name="Lorenz M.C."/>
            <person name="Birren B.W."/>
            <person name="Kellis M."/>
            <person name="Cuomo C.A."/>
        </authorList>
    </citation>
    <scope>NUCLEOTIDE SEQUENCE [LARGE SCALE GENOMIC DNA]</scope>
    <source>
        <strain>ATCC MYA-3404 / T1</strain>
    </source>
</reference>
<proteinExistence type="inferred from homology"/>
<organism>
    <name type="scientific">Candida tropicalis (strain ATCC MYA-3404 / T1)</name>
    <name type="common">Yeast</name>
    <dbReference type="NCBI Taxonomy" id="294747"/>
    <lineage>
        <taxon>Eukaryota</taxon>
        <taxon>Fungi</taxon>
        <taxon>Dikarya</taxon>
        <taxon>Ascomycota</taxon>
        <taxon>Saccharomycotina</taxon>
        <taxon>Pichiomycetes</taxon>
        <taxon>Debaryomycetaceae</taxon>
        <taxon>Candida/Lodderomyces clade</taxon>
        <taxon>Candida</taxon>
    </lineage>
</organism>
<sequence>MLRTAIRNNVQVSQKRTYIMSTIASTFLGSILFSKNNQLASKMENGELHMPKDPTLSYLNNNNSNNQAEPYFKRREPDYPGHVPLYNYEKFLMFLGSSIGSFFHPEENKYIVALGESTAIEPILKKLQKTMLSDEIGRQILKEKPRITSTSLNLDYLRSLPDNTIGKNYINWLDKEGVSPDTRVQVKYIDNEELSYIFQRYRECHDFYHAITGLPIIIEGEISVKVFEFMNIGIPMTGLGALFAPLRLKSSQRKRLREIYYPWAIKNGIYSKPLINVYWEKILEQDVDEFRKQMGIETPPDLRNMRKEYFARKKLEKQGKL</sequence>
<accession>C5MFD6</accession>
<gene>
    <name evidence="1" type="primary">COQ4</name>
    <name type="ORF">CTRG_04779</name>
</gene>
<protein>
    <recommendedName>
        <fullName evidence="1">Ubiquinone biosynthesis protein COQ4, mitochondrial</fullName>
    </recommendedName>
    <alternativeName>
        <fullName>4-hydroxy-3-methoxy-5-polyprenylbenzoate decarboxylase</fullName>
        <ecNumber evidence="1">4.1.1.130</ecNumber>
    </alternativeName>
    <alternativeName>
        <fullName evidence="1">Coenzyme Q biosynthesis protein 4</fullName>
    </alternativeName>
</protein>
<comment type="function">
    <text evidence="1">Lyase that catalyzes the C1-decarboxylation of 4-hydroxy-3-methoxy-5-(all-trans-polyprenyl)benzoic acid into 2-methoxy-6-(all-trans-polyprenyl)phenol during ubiquinone biosynthesis.</text>
</comment>
<comment type="catalytic activity">
    <reaction evidence="1">
        <text>a 4-hydroxy-3-methoxy-5-(all-trans-polyprenyl)benzoate + H(+) = a 2-methoxy-6-(all-trans-polyprenyl)phenol + CO2</text>
        <dbReference type="Rhea" id="RHEA:81179"/>
        <dbReference type="Rhea" id="RHEA-COMP:9551"/>
        <dbReference type="Rhea" id="RHEA-COMP:10931"/>
        <dbReference type="ChEBI" id="CHEBI:15378"/>
        <dbReference type="ChEBI" id="CHEBI:16526"/>
        <dbReference type="ChEBI" id="CHEBI:62731"/>
        <dbReference type="ChEBI" id="CHEBI:84443"/>
        <dbReference type="EC" id="4.1.1.130"/>
    </reaction>
</comment>
<comment type="cofactor">
    <cofactor evidence="1">
        <name>Zn(2+)</name>
        <dbReference type="ChEBI" id="CHEBI:29105"/>
    </cofactor>
</comment>
<comment type="pathway">
    <text evidence="1">Cofactor biosynthesis; ubiquinone biosynthesis.</text>
</comment>
<comment type="subunit">
    <text evidence="1">Component of a multi-subunit COQ enzyme complex, composed of at least COQ3, COQ4, COQ5, COQ6, COQ7 and COQ9.</text>
</comment>
<comment type="subcellular location">
    <subcellularLocation>
        <location evidence="1">Mitochondrion inner membrane</location>
        <topology evidence="1">Peripheral membrane protein</topology>
        <orientation evidence="1">Matrix side</orientation>
    </subcellularLocation>
</comment>
<comment type="miscellaneous">
    <text evidence="1">This protein may be expected to contain an N-terminal transit peptide but none has been predicted.</text>
</comment>
<comment type="similarity">
    <text evidence="1">Belongs to the COQ4 family.</text>
</comment>
<keyword id="KW-0456">Lyase</keyword>
<keyword id="KW-0472">Membrane</keyword>
<keyword id="KW-0479">Metal-binding</keyword>
<keyword id="KW-0496">Mitochondrion</keyword>
<keyword id="KW-0999">Mitochondrion inner membrane</keyword>
<keyword id="KW-1185">Reference proteome</keyword>
<keyword id="KW-0831">Ubiquinone biosynthesis</keyword>
<keyword id="KW-0862">Zinc</keyword>
<name>COQ4_CANTT</name>
<feature type="chain" id="PRO_0000388106" description="Ubiquinone biosynthesis protein COQ4, mitochondrial">
    <location>
        <begin position="1"/>
        <end position="321"/>
    </location>
</feature>
<feature type="binding site" evidence="1">
    <location>
        <position position="205"/>
    </location>
    <ligand>
        <name>Zn(2+)</name>
        <dbReference type="ChEBI" id="CHEBI:29105"/>
    </ligand>
</feature>
<feature type="binding site" evidence="1">
    <location>
        <position position="206"/>
    </location>
    <ligand>
        <name>Zn(2+)</name>
        <dbReference type="ChEBI" id="CHEBI:29105"/>
    </ligand>
</feature>
<feature type="binding site" evidence="1">
    <location>
        <position position="209"/>
    </location>
    <ligand>
        <name>Zn(2+)</name>
        <dbReference type="ChEBI" id="CHEBI:29105"/>
    </ligand>
</feature>
<feature type="binding site" evidence="1">
    <location>
        <position position="221"/>
    </location>
    <ligand>
        <name>Zn(2+)</name>
        <dbReference type="ChEBI" id="CHEBI:29105"/>
    </ligand>
</feature>
<dbReference type="EC" id="4.1.1.130" evidence="1"/>
<dbReference type="EMBL" id="GG692400">
    <property type="protein sequence ID" value="EER31996.1"/>
    <property type="molecule type" value="Genomic_DNA"/>
</dbReference>
<dbReference type="RefSeq" id="XP_002550481.1">
    <property type="nucleotide sequence ID" value="XM_002550435.1"/>
</dbReference>
<dbReference type="SMR" id="C5MFD6"/>
<dbReference type="STRING" id="294747.C5MFD6"/>
<dbReference type="EnsemblFungi" id="CTRG_04779-t43_1">
    <property type="protein sequence ID" value="CTRG_04779-t43_1-p1"/>
    <property type="gene ID" value="CTRG_04779"/>
</dbReference>
<dbReference type="GeneID" id="8298132"/>
<dbReference type="KEGG" id="ctp:CTRG_04779"/>
<dbReference type="VEuPathDB" id="FungiDB:CTRG_04779"/>
<dbReference type="eggNOG" id="KOG3244">
    <property type="taxonomic scope" value="Eukaryota"/>
</dbReference>
<dbReference type="HOGENOM" id="CLU_061241_0_2_1"/>
<dbReference type="OrthoDB" id="4249at2759"/>
<dbReference type="UniPathway" id="UPA00232"/>
<dbReference type="Proteomes" id="UP000002037">
    <property type="component" value="Unassembled WGS sequence"/>
</dbReference>
<dbReference type="GO" id="GO:0031314">
    <property type="term" value="C:extrinsic component of mitochondrial inner membrane"/>
    <property type="evidence" value="ECO:0007669"/>
    <property type="project" value="UniProtKB-UniRule"/>
</dbReference>
<dbReference type="GO" id="GO:0006744">
    <property type="term" value="P:ubiquinone biosynthetic process"/>
    <property type="evidence" value="ECO:0007669"/>
    <property type="project" value="UniProtKB-UniRule"/>
</dbReference>
<dbReference type="HAMAP" id="MF_03111">
    <property type="entry name" value="Coq4"/>
    <property type="match status" value="1"/>
</dbReference>
<dbReference type="InterPro" id="IPR007715">
    <property type="entry name" value="Coq4"/>
</dbReference>
<dbReference type="InterPro" id="IPR027540">
    <property type="entry name" value="Coq4_euk"/>
</dbReference>
<dbReference type="PANTHER" id="PTHR12922">
    <property type="entry name" value="UBIQUINONE BIOSYNTHESIS PROTEIN"/>
    <property type="match status" value="1"/>
</dbReference>
<dbReference type="PANTHER" id="PTHR12922:SF7">
    <property type="entry name" value="UBIQUINONE BIOSYNTHESIS PROTEIN COQ4 HOMOLOG, MITOCHONDRIAL"/>
    <property type="match status" value="1"/>
</dbReference>
<dbReference type="Pfam" id="PF05019">
    <property type="entry name" value="Coq4"/>
    <property type="match status" value="1"/>
</dbReference>
<evidence type="ECO:0000255" key="1">
    <source>
        <dbReference type="HAMAP-Rule" id="MF_03111"/>
    </source>
</evidence>